<dbReference type="EC" id="1.1.1.86" evidence="1"/>
<dbReference type="EMBL" id="CP000680">
    <property type="protein sequence ID" value="ABP83777.1"/>
    <property type="molecule type" value="Genomic_DNA"/>
</dbReference>
<dbReference type="SMR" id="A4XR11"/>
<dbReference type="STRING" id="399739.Pmen_1009"/>
<dbReference type="KEGG" id="pmy:Pmen_1009"/>
<dbReference type="eggNOG" id="COG0059">
    <property type="taxonomic scope" value="Bacteria"/>
</dbReference>
<dbReference type="HOGENOM" id="CLU_033821_0_1_6"/>
<dbReference type="OrthoDB" id="9804088at2"/>
<dbReference type="UniPathway" id="UPA00047">
    <property type="reaction ID" value="UER00056"/>
</dbReference>
<dbReference type="UniPathway" id="UPA00049">
    <property type="reaction ID" value="UER00060"/>
</dbReference>
<dbReference type="GO" id="GO:0005829">
    <property type="term" value="C:cytosol"/>
    <property type="evidence" value="ECO:0007669"/>
    <property type="project" value="TreeGrafter"/>
</dbReference>
<dbReference type="GO" id="GO:0004455">
    <property type="term" value="F:ketol-acid reductoisomerase activity"/>
    <property type="evidence" value="ECO:0007669"/>
    <property type="project" value="UniProtKB-UniRule"/>
</dbReference>
<dbReference type="GO" id="GO:0000287">
    <property type="term" value="F:magnesium ion binding"/>
    <property type="evidence" value="ECO:0007669"/>
    <property type="project" value="UniProtKB-UniRule"/>
</dbReference>
<dbReference type="GO" id="GO:0050661">
    <property type="term" value="F:NADP binding"/>
    <property type="evidence" value="ECO:0007669"/>
    <property type="project" value="InterPro"/>
</dbReference>
<dbReference type="GO" id="GO:0009097">
    <property type="term" value="P:isoleucine biosynthetic process"/>
    <property type="evidence" value="ECO:0007669"/>
    <property type="project" value="UniProtKB-UniRule"/>
</dbReference>
<dbReference type="GO" id="GO:0009099">
    <property type="term" value="P:L-valine biosynthetic process"/>
    <property type="evidence" value="ECO:0007669"/>
    <property type="project" value="UniProtKB-UniRule"/>
</dbReference>
<dbReference type="FunFam" id="3.40.50.720:FF:000023">
    <property type="entry name" value="Ketol-acid reductoisomerase (NADP(+))"/>
    <property type="match status" value="1"/>
</dbReference>
<dbReference type="Gene3D" id="6.10.240.10">
    <property type="match status" value="1"/>
</dbReference>
<dbReference type="Gene3D" id="3.40.50.720">
    <property type="entry name" value="NAD(P)-binding Rossmann-like Domain"/>
    <property type="match status" value="1"/>
</dbReference>
<dbReference type="HAMAP" id="MF_00435">
    <property type="entry name" value="IlvC"/>
    <property type="match status" value="1"/>
</dbReference>
<dbReference type="InterPro" id="IPR008927">
    <property type="entry name" value="6-PGluconate_DH-like_C_sf"/>
</dbReference>
<dbReference type="InterPro" id="IPR013023">
    <property type="entry name" value="KARI"/>
</dbReference>
<dbReference type="InterPro" id="IPR000506">
    <property type="entry name" value="KARI_C"/>
</dbReference>
<dbReference type="InterPro" id="IPR013116">
    <property type="entry name" value="KARI_N"/>
</dbReference>
<dbReference type="InterPro" id="IPR014359">
    <property type="entry name" value="KARI_prok"/>
</dbReference>
<dbReference type="InterPro" id="IPR036291">
    <property type="entry name" value="NAD(P)-bd_dom_sf"/>
</dbReference>
<dbReference type="NCBIfam" id="TIGR00465">
    <property type="entry name" value="ilvC"/>
    <property type="match status" value="1"/>
</dbReference>
<dbReference type="NCBIfam" id="NF004017">
    <property type="entry name" value="PRK05479.1"/>
    <property type="match status" value="1"/>
</dbReference>
<dbReference type="NCBIfam" id="NF009940">
    <property type="entry name" value="PRK13403.1"/>
    <property type="match status" value="1"/>
</dbReference>
<dbReference type="PANTHER" id="PTHR21371">
    <property type="entry name" value="KETOL-ACID REDUCTOISOMERASE, MITOCHONDRIAL"/>
    <property type="match status" value="1"/>
</dbReference>
<dbReference type="PANTHER" id="PTHR21371:SF1">
    <property type="entry name" value="KETOL-ACID REDUCTOISOMERASE, MITOCHONDRIAL"/>
    <property type="match status" value="1"/>
</dbReference>
<dbReference type="Pfam" id="PF01450">
    <property type="entry name" value="KARI_C"/>
    <property type="match status" value="1"/>
</dbReference>
<dbReference type="Pfam" id="PF07991">
    <property type="entry name" value="KARI_N"/>
    <property type="match status" value="1"/>
</dbReference>
<dbReference type="PIRSF" id="PIRSF000116">
    <property type="entry name" value="IlvC_gammaproteo"/>
    <property type="match status" value="1"/>
</dbReference>
<dbReference type="SUPFAM" id="SSF48179">
    <property type="entry name" value="6-phosphogluconate dehydrogenase C-terminal domain-like"/>
    <property type="match status" value="1"/>
</dbReference>
<dbReference type="SUPFAM" id="SSF51735">
    <property type="entry name" value="NAD(P)-binding Rossmann-fold domains"/>
    <property type="match status" value="1"/>
</dbReference>
<dbReference type="PROSITE" id="PS51851">
    <property type="entry name" value="KARI_C"/>
    <property type="match status" value="1"/>
</dbReference>
<dbReference type="PROSITE" id="PS51850">
    <property type="entry name" value="KARI_N"/>
    <property type="match status" value="1"/>
</dbReference>
<reference key="1">
    <citation type="submission" date="2007-04" db="EMBL/GenBank/DDBJ databases">
        <title>Complete sequence of Pseudomonas mendocina ymp.</title>
        <authorList>
            <consortium name="US DOE Joint Genome Institute"/>
            <person name="Copeland A."/>
            <person name="Lucas S."/>
            <person name="Lapidus A."/>
            <person name="Barry K."/>
            <person name="Glavina del Rio T."/>
            <person name="Dalin E."/>
            <person name="Tice H."/>
            <person name="Pitluck S."/>
            <person name="Kiss H."/>
            <person name="Brettin T."/>
            <person name="Detter J.C."/>
            <person name="Bruce D."/>
            <person name="Han C."/>
            <person name="Schmutz J."/>
            <person name="Larimer F."/>
            <person name="Land M."/>
            <person name="Hauser L."/>
            <person name="Kyrpides N."/>
            <person name="Mikhailova N."/>
            <person name="Hersman L."/>
            <person name="Dubois J."/>
            <person name="Maurice P."/>
            <person name="Richardson P."/>
        </authorList>
    </citation>
    <scope>NUCLEOTIDE SEQUENCE [LARGE SCALE GENOMIC DNA]</scope>
    <source>
        <strain>ymp</strain>
    </source>
</reference>
<feature type="chain" id="PRO_1000050561" description="Ketol-acid reductoisomerase (NADP(+))">
    <location>
        <begin position="1"/>
        <end position="338"/>
    </location>
</feature>
<feature type="domain" description="KARI N-terminal Rossmann" evidence="2">
    <location>
        <begin position="1"/>
        <end position="181"/>
    </location>
</feature>
<feature type="domain" description="KARI C-terminal knotted" evidence="3">
    <location>
        <begin position="182"/>
        <end position="327"/>
    </location>
</feature>
<feature type="active site" evidence="1">
    <location>
        <position position="107"/>
    </location>
</feature>
<feature type="binding site" evidence="1">
    <location>
        <begin position="24"/>
        <end position="27"/>
    </location>
    <ligand>
        <name>NADP(+)</name>
        <dbReference type="ChEBI" id="CHEBI:58349"/>
    </ligand>
</feature>
<feature type="binding site" evidence="1">
    <location>
        <position position="47"/>
    </location>
    <ligand>
        <name>NADP(+)</name>
        <dbReference type="ChEBI" id="CHEBI:58349"/>
    </ligand>
</feature>
<feature type="binding site" evidence="1">
    <location>
        <position position="50"/>
    </location>
    <ligand>
        <name>NADP(+)</name>
        <dbReference type="ChEBI" id="CHEBI:58349"/>
    </ligand>
</feature>
<feature type="binding site" evidence="1">
    <location>
        <position position="52"/>
    </location>
    <ligand>
        <name>NADP(+)</name>
        <dbReference type="ChEBI" id="CHEBI:58349"/>
    </ligand>
</feature>
<feature type="binding site" evidence="1">
    <location>
        <begin position="82"/>
        <end position="85"/>
    </location>
    <ligand>
        <name>NADP(+)</name>
        <dbReference type="ChEBI" id="CHEBI:58349"/>
    </ligand>
</feature>
<feature type="binding site" evidence="1">
    <location>
        <position position="133"/>
    </location>
    <ligand>
        <name>NADP(+)</name>
        <dbReference type="ChEBI" id="CHEBI:58349"/>
    </ligand>
</feature>
<feature type="binding site" evidence="1">
    <location>
        <position position="190"/>
    </location>
    <ligand>
        <name>Mg(2+)</name>
        <dbReference type="ChEBI" id="CHEBI:18420"/>
        <label>1</label>
    </ligand>
</feature>
<feature type="binding site" evidence="1">
    <location>
        <position position="190"/>
    </location>
    <ligand>
        <name>Mg(2+)</name>
        <dbReference type="ChEBI" id="CHEBI:18420"/>
        <label>2</label>
    </ligand>
</feature>
<feature type="binding site" evidence="1">
    <location>
        <position position="194"/>
    </location>
    <ligand>
        <name>Mg(2+)</name>
        <dbReference type="ChEBI" id="CHEBI:18420"/>
        <label>1</label>
    </ligand>
</feature>
<feature type="binding site" evidence="1">
    <location>
        <position position="226"/>
    </location>
    <ligand>
        <name>Mg(2+)</name>
        <dbReference type="ChEBI" id="CHEBI:18420"/>
        <label>2</label>
    </ligand>
</feature>
<feature type="binding site" evidence="1">
    <location>
        <position position="230"/>
    </location>
    <ligand>
        <name>Mg(2+)</name>
        <dbReference type="ChEBI" id="CHEBI:18420"/>
        <label>2</label>
    </ligand>
</feature>
<feature type="binding site" evidence="1">
    <location>
        <position position="251"/>
    </location>
    <ligand>
        <name>substrate</name>
    </ligand>
</feature>
<keyword id="KW-0028">Amino-acid biosynthesis</keyword>
<keyword id="KW-0100">Branched-chain amino acid biosynthesis</keyword>
<keyword id="KW-0460">Magnesium</keyword>
<keyword id="KW-0479">Metal-binding</keyword>
<keyword id="KW-0521">NADP</keyword>
<keyword id="KW-0560">Oxidoreductase</keyword>
<organism>
    <name type="scientific">Ectopseudomonas mendocina (strain ymp)</name>
    <name type="common">Pseudomonas mendocina</name>
    <dbReference type="NCBI Taxonomy" id="399739"/>
    <lineage>
        <taxon>Bacteria</taxon>
        <taxon>Pseudomonadati</taxon>
        <taxon>Pseudomonadota</taxon>
        <taxon>Gammaproteobacteria</taxon>
        <taxon>Pseudomonadales</taxon>
        <taxon>Pseudomonadaceae</taxon>
        <taxon>Ectopseudomonas</taxon>
    </lineage>
</organism>
<name>ILVC_ECTM1</name>
<comment type="function">
    <text evidence="1">Involved in the biosynthesis of branched-chain amino acids (BCAA). Catalyzes an alkyl-migration followed by a ketol-acid reduction of (S)-2-acetolactate (S2AL) to yield (R)-2,3-dihydroxy-isovalerate. In the isomerase reaction, S2AL is rearranged via a Mg-dependent methyl migration to produce 3-hydroxy-3-methyl-2-ketobutyrate (HMKB). In the reductase reaction, this 2-ketoacid undergoes a metal-dependent reduction by NADPH to yield (R)-2,3-dihydroxy-isovalerate.</text>
</comment>
<comment type="catalytic activity">
    <reaction evidence="1">
        <text>(2R)-2,3-dihydroxy-3-methylbutanoate + NADP(+) = (2S)-2-acetolactate + NADPH + H(+)</text>
        <dbReference type="Rhea" id="RHEA:22068"/>
        <dbReference type="ChEBI" id="CHEBI:15378"/>
        <dbReference type="ChEBI" id="CHEBI:49072"/>
        <dbReference type="ChEBI" id="CHEBI:57783"/>
        <dbReference type="ChEBI" id="CHEBI:58349"/>
        <dbReference type="ChEBI" id="CHEBI:58476"/>
        <dbReference type="EC" id="1.1.1.86"/>
    </reaction>
</comment>
<comment type="catalytic activity">
    <reaction evidence="1">
        <text>(2R,3R)-2,3-dihydroxy-3-methylpentanoate + NADP(+) = (S)-2-ethyl-2-hydroxy-3-oxobutanoate + NADPH + H(+)</text>
        <dbReference type="Rhea" id="RHEA:13493"/>
        <dbReference type="ChEBI" id="CHEBI:15378"/>
        <dbReference type="ChEBI" id="CHEBI:49256"/>
        <dbReference type="ChEBI" id="CHEBI:49258"/>
        <dbReference type="ChEBI" id="CHEBI:57783"/>
        <dbReference type="ChEBI" id="CHEBI:58349"/>
        <dbReference type="EC" id="1.1.1.86"/>
    </reaction>
</comment>
<comment type="cofactor">
    <cofactor evidence="1">
        <name>Mg(2+)</name>
        <dbReference type="ChEBI" id="CHEBI:18420"/>
    </cofactor>
    <text evidence="1">Binds 2 magnesium ions per subunit.</text>
</comment>
<comment type="pathway">
    <text evidence="1">Amino-acid biosynthesis; L-isoleucine biosynthesis; L-isoleucine from 2-oxobutanoate: step 2/4.</text>
</comment>
<comment type="pathway">
    <text evidence="1">Amino-acid biosynthesis; L-valine biosynthesis; L-valine from pyruvate: step 2/4.</text>
</comment>
<comment type="similarity">
    <text evidence="1">Belongs to the ketol-acid reductoisomerase family.</text>
</comment>
<protein>
    <recommendedName>
        <fullName evidence="1">Ketol-acid reductoisomerase (NADP(+))</fullName>
        <shortName evidence="1">KARI</shortName>
        <ecNumber evidence="1">1.1.1.86</ecNumber>
    </recommendedName>
    <alternativeName>
        <fullName evidence="1">Acetohydroxy-acid isomeroreductase</fullName>
        <shortName evidence="1">AHIR</shortName>
    </alternativeName>
    <alternativeName>
        <fullName evidence="1">Alpha-keto-beta-hydroxylacyl reductoisomerase</fullName>
    </alternativeName>
    <alternativeName>
        <fullName evidence="1">Ketol-acid reductoisomerase type 1</fullName>
    </alternativeName>
    <alternativeName>
        <fullName evidence="1">Ketol-acid reductoisomerase type I</fullName>
    </alternativeName>
</protein>
<evidence type="ECO:0000255" key="1">
    <source>
        <dbReference type="HAMAP-Rule" id="MF_00435"/>
    </source>
</evidence>
<evidence type="ECO:0000255" key="2">
    <source>
        <dbReference type="PROSITE-ProRule" id="PRU01197"/>
    </source>
</evidence>
<evidence type="ECO:0000255" key="3">
    <source>
        <dbReference type="PROSITE-ProRule" id="PRU01198"/>
    </source>
</evidence>
<gene>
    <name evidence="1" type="primary">ilvC</name>
    <name type="ordered locus">Pmen_1009</name>
</gene>
<sequence length="338" mass="36296">MKVYYDKDCDLSIIQGKKVAIIGYGSQGHAQACNLKDSGVDVTIGLRKGSATVAKAEAHGLKVTDVASAVAAADLVMILTPDEFQGQLYKNEIEPNIKKGATLAFSHGFAIHYNQVVPRADLDVIMIAPKAPGHTVRTEFVKGGGIPDLIAVYQDASGNAKNVALSYASGVGGGRTGIIETTFKDETETDLFGEQAVLCGGTVELVKAGFETLVEAGYAPEMAYFECLHELKLIVDLMYEGGIANMNYSISNNAEYGEYVTGPEVINAESRQAMRNALKRIQDGEYAKMFISEGATGYPSMTAKRRNNAAHGIEVIGEQLRAMMPWIAANKIVDKTKN</sequence>
<proteinExistence type="inferred from homology"/>
<accession>A4XR11</accession>